<comment type="subcellular location">
    <subcellularLocation>
        <location evidence="1">Secreted</location>
    </subcellularLocation>
</comment>
<comment type="similarity">
    <text evidence="3">Belongs to the DEFL family.</text>
</comment>
<comment type="sequence caution" evidence="3">
    <conflict type="frameshift">
        <sequence resource="EMBL-CDS" id="AEE82926"/>
    </conflict>
</comment>
<comment type="sequence caution" evidence="3">
    <conflict type="frameshift">
        <sequence resource="EMBL" id="AF080119"/>
    </conflict>
</comment>
<comment type="sequence caution" evidence="3">
    <conflict type="frameshift">
        <sequence resource="EMBL" id="AL161518"/>
    </conflict>
</comment>
<accession>P82640</accession>
<accession>F4JMF8</accession>
<feature type="signal peptide" evidence="2">
    <location>
        <begin position="1"/>
        <end position="23"/>
    </location>
</feature>
<feature type="chain" id="PRO_0000031947" description="Putative defensin-like protein 237">
    <location>
        <begin position="24"/>
        <end position="97"/>
    </location>
</feature>
<feature type="disulfide bond" evidence="1">
    <location>
        <begin position="30"/>
        <end position="94"/>
    </location>
</feature>
<feature type="disulfide bond" evidence="1">
    <location>
        <begin position="40"/>
        <end position="71"/>
    </location>
</feature>
<feature type="disulfide bond" evidence="1">
    <location>
        <begin position="48"/>
        <end position="84"/>
    </location>
</feature>
<feature type="disulfide bond" evidence="1">
    <location>
        <begin position="69"/>
        <end position="86"/>
    </location>
</feature>
<dbReference type="EMBL" id="AF080119">
    <property type="status" value="NOT_ANNOTATED_CDS"/>
    <property type="molecule type" value="Genomic_DNA"/>
</dbReference>
<dbReference type="EMBL" id="AL161518">
    <property type="status" value="NOT_ANNOTATED_CDS"/>
    <property type="molecule type" value="Genomic_DNA"/>
</dbReference>
<dbReference type="EMBL" id="CP002687">
    <property type="protein sequence ID" value="AEE82926.1"/>
    <property type="status" value="ALT_FRAME"/>
    <property type="molecule type" value="Genomic_DNA"/>
</dbReference>
<dbReference type="RefSeq" id="NP_001031616.1">
    <property type="nucleotide sequence ID" value="NM_001036539.2"/>
</dbReference>
<dbReference type="SMR" id="P82640"/>
<dbReference type="STRING" id="3702.P82640"/>
<dbReference type="PaxDb" id="3702-AT4G10767.1"/>
<dbReference type="GeneID" id="3770200"/>
<dbReference type="KEGG" id="ath:AT4G10767"/>
<dbReference type="Araport" id="AT4G10767"/>
<dbReference type="TAIR" id="AT4G10767"/>
<dbReference type="InParanoid" id="P82640"/>
<dbReference type="PhylomeDB" id="P82640"/>
<dbReference type="PRO" id="PR:P82640"/>
<dbReference type="Proteomes" id="UP000006548">
    <property type="component" value="Chromosome 4"/>
</dbReference>
<dbReference type="ExpressionAtlas" id="P82640">
    <property type="expression patterns" value="baseline"/>
</dbReference>
<dbReference type="GO" id="GO:0005576">
    <property type="term" value="C:extracellular region"/>
    <property type="evidence" value="ECO:0007669"/>
    <property type="project" value="UniProtKB-SubCell"/>
</dbReference>
<dbReference type="GO" id="GO:0050832">
    <property type="term" value="P:defense response to fungus"/>
    <property type="evidence" value="ECO:0007669"/>
    <property type="project" value="UniProtKB-KW"/>
</dbReference>
<dbReference type="GO" id="GO:0031640">
    <property type="term" value="P:killing of cells of another organism"/>
    <property type="evidence" value="ECO:0007669"/>
    <property type="project" value="UniProtKB-KW"/>
</dbReference>
<dbReference type="GO" id="GO:0007165">
    <property type="term" value="P:signal transduction"/>
    <property type="evidence" value="ECO:0007669"/>
    <property type="project" value="InterPro"/>
</dbReference>
<dbReference type="InterPro" id="IPR010682">
    <property type="entry name" value="SCRL"/>
</dbReference>
<dbReference type="PANTHER" id="PTHR34450:SF6">
    <property type="entry name" value="DEFENSIN-LIKE PROTEIN 241-RELATED"/>
    <property type="match status" value="1"/>
</dbReference>
<dbReference type="PANTHER" id="PTHR34450">
    <property type="entry name" value="DEFENSIN-LIKE PROTEIN 245-RELATED"/>
    <property type="match status" value="1"/>
</dbReference>
<dbReference type="Pfam" id="PF06876">
    <property type="entry name" value="SCRL"/>
    <property type="match status" value="1"/>
</dbReference>
<name>DF237_ARATH</name>
<evidence type="ECO:0000250" key="1"/>
<evidence type="ECO:0000255" key="2"/>
<evidence type="ECO:0000305" key="3"/>
<reference evidence="3" key="1">
    <citation type="journal article" date="1999" name="Nature">
        <title>Sequence and analysis of chromosome 4 of the plant Arabidopsis thaliana.</title>
        <authorList>
            <person name="Mayer K.F.X."/>
            <person name="Schueller C."/>
            <person name="Wambutt R."/>
            <person name="Murphy G."/>
            <person name="Volckaert G."/>
            <person name="Pohl T."/>
            <person name="Duesterhoeft A."/>
            <person name="Stiekema W."/>
            <person name="Entian K.-D."/>
            <person name="Terryn N."/>
            <person name="Harris B."/>
            <person name="Ansorge W."/>
            <person name="Brandt P."/>
            <person name="Grivell L.A."/>
            <person name="Rieger M."/>
            <person name="Weichselgartner M."/>
            <person name="de Simone V."/>
            <person name="Obermaier B."/>
            <person name="Mache R."/>
            <person name="Mueller M."/>
            <person name="Kreis M."/>
            <person name="Delseny M."/>
            <person name="Puigdomenech P."/>
            <person name="Watson M."/>
            <person name="Schmidtheini T."/>
            <person name="Reichert B."/>
            <person name="Portetelle D."/>
            <person name="Perez-Alonso M."/>
            <person name="Boutry M."/>
            <person name="Bancroft I."/>
            <person name="Vos P."/>
            <person name="Hoheisel J."/>
            <person name="Zimmermann W."/>
            <person name="Wedler H."/>
            <person name="Ridley P."/>
            <person name="Langham S.-A."/>
            <person name="McCullagh B."/>
            <person name="Bilham L."/>
            <person name="Robben J."/>
            <person name="van der Schueren J."/>
            <person name="Grymonprez B."/>
            <person name="Chuang Y.-J."/>
            <person name="Vandenbussche F."/>
            <person name="Braeken M."/>
            <person name="Weltjens I."/>
            <person name="Voet M."/>
            <person name="Bastiaens I."/>
            <person name="Aert R."/>
            <person name="Defoor E."/>
            <person name="Weitzenegger T."/>
            <person name="Bothe G."/>
            <person name="Ramsperger U."/>
            <person name="Hilbert H."/>
            <person name="Braun M."/>
            <person name="Holzer E."/>
            <person name="Brandt A."/>
            <person name="Peters S."/>
            <person name="van Staveren M."/>
            <person name="Dirkse W."/>
            <person name="Mooijman P."/>
            <person name="Klein Lankhorst R."/>
            <person name="Rose M."/>
            <person name="Hauf J."/>
            <person name="Koetter P."/>
            <person name="Berneiser S."/>
            <person name="Hempel S."/>
            <person name="Feldpausch M."/>
            <person name="Lamberth S."/>
            <person name="Van den Daele H."/>
            <person name="De Keyser A."/>
            <person name="Buysshaert C."/>
            <person name="Gielen J."/>
            <person name="Villarroel R."/>
            <person name="De Clercq R."/>
            <person name="van Montagu M."/>
            <person name="Rogers J."/>
            <person name="Cronin A."/>
            <person name="Quail M.A."/>
            <person name="Bray-Allen S."/>
            <person name="Clark L."/>
            <person name="Doggett J."/>
            <person name="Hall S."/>
            <person name="Kay M."/>
            <person name="Lennard N."/>
            <person name="McLay K."/>
            <person name="Mayes R."/>
            <person name="Pettett A."/>
            <person name="Rajandream M.A."/>
            <person name="Lyne M."/>
            <person name="Benes V."/>
            <person name="Rechmann S."/>
            <person name="Borkova D."/>
            <person name="Bloecker H."/>
            <person name="Scharfe M."/>
            <person name="Grimm M."/>
            <person name="Loehnert T.-H."/>
            <person name="Dose S."/>
            <person name="de Haan M."/>
            <person name="Maarse A.C."/>
            <person name="Schaefer M."/>
            <person name="Mueller-Auer S."/>
            <person name="Gabel C."/>
            <person name="Fuchs M."/>
            <person name="Fartmann B."/>
            <person name="Granderath K."/>
            <person name="Dauner D."/>
            <person name="Herzl A."/>
            <person name="Neumann S."/>
            <person name="Argiriou A."/>
            <person name="Vitale D."/>
            <person name="Liguori R."/>
            <person name="Piravandi E."/>
            <person name="Massenet O."/>
            <person name="Quigley F."/>
            <person name="Clabauld G."/>
            <person name="Muendlein A."/>
            <person name="Felber R."/>
            <person name="Schnabl S."/>
            <person name="Hiller R."/>
            <person name="Schmidt W."/>
            <person name="Lecharny A."/>
            <person name="Aubourg S."/>
            <person name="Chefdor F."/>
            <person name="Cooke R."/>
            <person name="Berger C."/>
            <person name="Monfort A."/>
            <person name="Casacuberta E."/>
            <person name="Gibbons T."/>
            <person name="Weber N."/>
            <person name="Vandenbol M."/>
            <person name="Bargues M."/>
            <person name="Terol J."/>
            <person name="Torres A."/>
            <person name="Perez-Perez A."/>
            <person name="Purnelle B."/>
            <person name="Bent E."/>
            <person name="Johnson S."/>
            <person name="Tacon D."/>
            <person name="Jesse T."/>
            <person name="Heijnen L."/>
            <person name="Schwarz S."/>
            <person name="Scholler P."/>
            <person name="Heber S."/>
            <person name="Francs P."/>
            <person name="Bielke C."/>
            <person name="Frishman D."/>
            <person name="Haase D."/>
            <person name="Lemcke K."/>
            <person name="Mewes H.-W."/>
            <person name="Stocker S."/>
            <person name="Zaccaria P."/>
            <person name="Bevan M."/>
            <person name="Wilson R.K."/>
            <person name="de la Bastide M."/>
            <person name="Habermann K."/>
            <person name="Parnell L."/>
            <person name="Dedhia N."/>
            <person name="Gnoj L."/>
            <person name="Schutz K."/>
            <person name="Huang E."/>
            <person name="Spiegel L."/>
            <person name="Sekhon M."/>
            <person name="Murray J."/>
            <person name="Sheet P."/>
            <person name="Cordes M."/>
            <person name="Abu-Threideh J."/>
            <person name="Stoneking T."/>
            <person name="Kalicki J."/>
            <person name="Graves T."/>
            <person name="Harmon G."/>
            <person name="Edwards J."/>
            <person name="Latreille P."/>
            <person name="Courtney L."/>
            <person name="Cloud J."/>
            <person name="Abbott A."/>
            <person name="Scott K."/>
            <person name="Johnson D."/>
            <person name="Minx P."/>
            <person name="Bentley D."/>
            <person name="Fulton B."/>
            <person name="Miller N."/>
            <person name="Greco T."/>
            <person name="Kemp K."/>
            <person name="Kramer J."/>
            <person name="Fulton L."/>
            <person name="Mardis E."/>
            <person name="Dante M."/>
            <person name="Pepin K."/>
            <person name="Hillier L.W."/>
            <person name="Nelson J."/>
            <person name="Spieth J."/>
            <person name="Ryan E."/>
            <person name="Andrews S."/>
            <person name="Geisel C."/>
            <person name="Layman D."/>
            <person name="Du H."/>
            <person name="Ali J."/>
            <person name="Berghoff A."/>
            <person name="Jones K."/>
            <person name="Drone K."/>
            <person name="Cotton M."/>
            <person name="Joshu C."/>
            <person name="Antonoiu B."/>
            <person name="Zidanic M."/>
            <person name="Strong C."/>
            <person name="Sun H."/>
            <person name="Lamar B."/>
            <person name="Yordan C."/>
            <person name="Ma P."/>
            <person name="Zhong J."/>
            <person name="Preston R."/>
            <person name="Vil D."/>
            <person name="Shekher M."/>
            <person name="Matero A."/>
            <person name="Shah R."/>
            <person name="Swaby I.K."/>
            <person name="O'Shaughnessy A."/>
            <person name="Rodriguez M."/>
            <person name="Hoffman J."/>
            <person name="Till S."/>
            <person name="Granat S."/>
            <person name="Shohdy N."/>
            <person name="Hasegawa A."/>
            <person name="Hameed A."/>
            <person name="Lodhi M."/>
            <person name="Johnson A."/>
            <person name="Chen E."/>
            <person name="Marra M.A."/>
            <person name="Martienssen R."/>
            <person name="McCombie W.R."/>
        </authorList>
    </citation>
    <scope>NUCLEOTIDE SEQUENCE [LARGE SCALE GENOMIC DNA]</scope>
    <source>
        <strain>cv. Columbia</strain>
    </source>
</reference>
<reference key="2">
    <citation type="journal article" date="2017" name="Plant J.">
        <title>Araport11: a complete reannotation of the Arabidopsis thaliana reference genome.</title>
        <authorList>
            <person name="Cheng C.Y."/>
            <person name="Krishnakumar V."/>
            <person name="Chan A.P."/>
            <person name="Thibaud-Nissen F."/>
            <person name="Schobel S."/>
            <person name="Town C.D."/>
        </authorList>
    </citation>
    <scope>GENOME REANNOTATION</scope>
    <source>
        <strain>cv. Columbia</strain>
    </source>
</reference>
<reference evidence="3" key="3">
    <citation type="journal article" date="2001" name="Plant Mol. Biol.">
        <title>Two large Arabidopsis thaliana gene families are homologous to the Brassica gene superfamily that encodes pollen coat proteins and the male component of the self-incompatibility response.</title>
        <authorList>
            <person name="Vanoosthuyse V."/>
            <person name="Miege C."/>
            <person name="Dumas C."/>
            <person name="Cock J.M."/>
        </authorList>
    </citation>
    <scope>IDENTIFICATION</scope>
</reference>
<reference key="4">
    <citation type="journal article" date="2005" name="Plant Physiol.">
        <title>Genome organization of more than 300 defensin-like genes in Arabidopsis.</title>
        <authorList>
            <person name="Silverstein K.A.T."/>
            <person name="Graham M.A."/>
            <person name="Paape T.D."/>
            <person name="VandenBosch K.A."/>
        </authorList>
    </citation>
    <scope>GENE FAMILY</scope>
</reference>
<gene>
    <name type="primary">SCRL21</name>
    <name type="ordered locus">At4g10767</name>
    <name type="ORF">T12H20</name>
</gene>
<keyword id="KW-0929">Antimicrobial</keyword>
<keyword id="KW-1015">Disulfide bond</keyword>
<keyword id="KW-0295">Fungicide</keyword>
<keyword id="KW-0611">Plant defense</keyword>
<keyword id="KW-1185">Reference proteome</keyword>
<keyword id="KW-0964">Secreted</keyword>
<keyword id="KW-0732">Signal</keyword>
<sequence length="97" mass="11136">MRHATSPIVFCFLIFLVMNHVKGQAKKKRCPIGLHTYGKCGTDRAKFCFSEIESKLSFSKQVLNTISSCRCDDDRQGNKDLYWCQCDRREGRPCPAN</sequence>
<protein>
    <recommendedName>
        <fullName>Putative defensin-like protein 237</fullName>
    </recommendedName>
    <alternativeName>
        <fullName>Putative S locus cysteine-rich-like protein 21</fullName>
        <shortName>Protein SCRL21</shortName>
        <shortName>SCR-like protein 21</shortName>
    </alternativeName>
</protein>
<organism evidence="3">
    <name type="scientific">Arabidopsis thaliana</name>
    <name type="common">Mouse-ear cress</name>
    <dbReference type="NCBI Taxonomy" id="3702"/>
    <lineage>
        <taxon>Eukaryota</taxon>
        <taxon>Viridiplantae</taxon>
        <taxon>Streptophyta</taxon>
        <taxon>Embryophyta</taxon>
        <taxon>Tracheophyta</taxon>
        <taxon>Spermatophyta</taxon>
        <taxon>Magnoliopsida</taxon>
        <taxon>eudicotyledons</taxon>
        <taxon>Gunneridae</taxon>
        <taxon>Pentapetalae</taxon>
        <taxon>rosids</taxon>
        <taxon>malvids</taxon>
        <taxon>Brassicales</taxon>
        <taxon>Brassicaceae</taxon>
        <taxon>Camelineae</taxon>
        <taxon>Arabidopsis</taxon>
    </lineage>
</organism>
<proteinExistence type="inferred from homology"/>